<accession>B6DD58</accession>
<keyword id="KW-1015">Disulfide bond</keyword>
<keyword id="KW-0960">Knottin</keyword>
<keyword id="KW-0964">Secreted</keyword>
<keyword id="KW-0732">Signal</keyword>
<keyword id="KW-0800">Toxin</keyword>
<feature type="signal peptide" evidence="3">
    <location>
        <begin position="1"/>
        <end position="22"/>
    </location>
</feature>
<feature type="propeptide" id="PRO_0000401907" evidence="1">
    <location>
        <begin position="23"/>
        <end position="34"/>
    </location>
</feature>
<feature type="chain" id="PRO_0000401908" description="U19-lycotoxin-Ls1b">
    <location>
        <begin position="35"/>
        <end position="80"/>
    </location>
</feature>
<feature type="disulfide bond" evidence="2">
    <location>
        <begin position="36"/>
        <end position="50"/>
    </location>
</feature>
<feature type="disulfide bond" evidence="2">
    <location>
        <begin position="43"/>
        <end position="55"/>
    </location>
</feature>
<feature type="disulfide bond" evidence="2">
    <location>
        <begin position="49"/>
        <end position="66"/>
    </location>
</feature>
<feature type="disulfide bond" evidence="2">
    <location>
        <begin position="57"/>
        <end position="64"/>
    </location>
</feature>
<organism>
    <name type="scientific">Lycosa singoriensis</name>
    <name type="common">Wolf spider</name>
    <name type="synonym">Aranea singoriensis</name>
    <dbReference type="NCBI Taxonomy" id="434756"/>
    <lineage>
        <taxon>Eukaryota</taxon>
        <taxon>Metazoa</taxon>
        <taxon>Ecdysozoa</taxon>
        <taxon>Arthropoda</taxon>
        <taxon>Chelicerata</taxon>
        <taxon>Arachnida</taxon>
        <taxon>Araneae</taxon>
        <taxon>Araneomorphae</taxon>
        <taxon>Entelegynae</taxon>
        <taxon>Lycosoidea</taxon>
        <taxon>Lycosidae</taxon>
        <taxon>Lycosa</taxon>
    </lineage>
</organism>
<dbReference type="EMBL" id="EU926142">
    <property type="protein sequence ID" value="ACI41474.1"/>
    <property type="molecule type" value="mRNA"/>
</dbReference>
<dbReference type="EMBL" id="FM864146">
    <property type="protein sequence ID" value="CAS03743.1"/>
    <property type="molecule type" value="mRNA"/>
</dbReference>
<dbReference type="SMR" id="B6DD58"/>
<dbReference type="ArachnoServer" id="AS001081">
    <property type="toxin name" value="U19-lycotoxin-Ls1b"/>
</dbReference>
<dbReference type="GO" id="GO:0005576">
    <property type="term" value="C:extracellular region"/>
    <property type="evidence" value="ECO:0007669"/>
    <property type="project" value="UniProtKB-SubCell"/>
</dbReference>
<dbReference type="GO" id="GO:0008200">
    <property type="term" value="F:ion channel inhibitor activity"/>
    <property type="evidence" value="ECO:0007669"/>
    <property type="project" value="InterPro"/>
</dbReference>
<dbReference type="GO" id="GO:0090729">
    <property type="term" value="F:toxin activity"/>
    <property type="evidence" value="ECO:0007669"/>
    <property type="project" value="UniProtKB-KW"/>
</dbReference>
<dbReference type="CDD" id="cd12960">
    <property type="entry name" value="Spider_toxin"/>
    <property type="match status" value="1"/>
</dbReference>
<dbReference type="Gene3D" id="4.10.40.10">
    <property type="match status" value="1"/>
</dbReference>
<dbReference type="InterPro" id="IPR004169">
    <property type="entry name" value="Spidertoxin"/>
</dbReference>
<dbReference type="Pfam" id="PF02819">
    <property type="entry name" value="Toxin_9"/>
    <property type="match status" value="1"/>
</dbReference>
<dbReference type="SUPFAM" id="SSF57059">
    <property type="entry name" value="omega toxin-like"/>
    <property type="match status" value="1"/>
</dbReference>
<comment type="subcellular location">
    <subcellularLocation>
        <location evidence="4">Secreted</location>
    </subcellularLocation>
</comment>
<comment type="tissue specificity">
    <text evidence="4">Expressed by the venom gland.</text>
</comment>
<comment type="domain">
    <text evidence="2">The presence of a 'disulfide through disulfide knot' structurally defines this protein as a knottin.</text>
</comment>
<comment type="similarity">
    <text evidence="4">Belongs to the neurotoxin 02 (plectoxin) family. 05 (U19-lycotoxin) subfamily.</text>
</comment>
<evidence type="ECO:0000250" key="1"/>
<evidence type="ECO:0000250" key="2">
    <source>
        <dbReference type="UniProtKB" id="P30288"/>
    </source>
</evidence>
<evidence type="ECO:0000255" key="3"/>
<evidence type="ECO:0000305" key="4"/>
<name>TXJ07_LYCSI</name>
<proteinExistence type="inferred from homology"/>
<sequence>MSPKVQALIFIVGLITLLAAHAQEELSDNIESERGCSGAYKRCSSSQRCCEGRPCVCSAINSNCKCRKTYTELFKEYFGK</sequence>
<reference key="1">
    <citation type="journal article" date="2010" name="Zoology">
        <title>Transcriptome analysis of the venom glands of the Chinese wolf spider Lycosa singoriensis.</title>
        <authorList>
            <person name="Zhang Y."/>
            <person name="Chen J."/>
            <person name="Tang X."/>
            <person name="Wang F."/>
            <person name="Jiang L."/>
            <person name="Xiong X."/>
            <person name="Wang M."/>
            <person name="Rong M."/>
            <person name="Liu Z."/>
            <person name="Liang S."/>
        </authorList>
    </citation>
    <scope>NUCLEOTIDE SEQUENCE [LARGE SCALE MRNA]</scope>
    <source>
        <tissue>Venom gland</tissue>
    </source>
</reference>
<protein>
    <recommendedName>
        <fullName evidence="4">U19-lycotoxin-Ls1b</fullName>
        <shortName evidence="4">U19-LCTX-Ls1b</shortName>
    </recommendedName>
    <alternativeName>
        <fullName>Toxin-like structure LSTX-P7</fullName>
    </alternativeName>
</protein>